<gene>
    <name type="primary">cdc11</name>
    <name type="ORF">SPCC1739.11c</name>
</gene>
<protein>
    <recommendedName>
        <fullName>Septation initiation network scaffold protein cdc11</fullName>
        <shortName>SIN scaffold protein cdc11</shortName>
    </recommendedName>
    <alternativeName>
        <fullName>Cell division control protein 11</fullName>
    </alternativeName>
</protein>
<accession>O74473</accession>
<dbReference type="EMBL" id="CU329672">
    <property type="protein sequence ID" value="CAA20785.1"/>
    <property type="molecule type" value="Genomic_DNA"/>
</dbReference>
<dbReference type="PIR" id="T41119">
    <property type="entry name" value="T41119"/>
</dbReference>
<dbReference type="RefSeq" id="NP_588419.1">
    <property type="nucleotide sequence ID" value="NM_001023410.2"/>
</dbReference>
<dbReference type="SMR" id="O74473"/>
<dbReference type="BioGRID" id="275721">
    <property type="interactions" value="53"/>
</dbReference>
<dbReference type="FunCoup" id="O74473">
    <property type="interactions" value="1"/>
</dbReference>
<dbReference type="IntAct" id="O74473">
    <property type="interactions" value="3"/>
</dbReference>
<dbReference type="STRING" id="284812.O74473"/>
<dbReference type="iPTMnet" id="O74473"/>
<dbReference type="PaxDb" id="4896-SPCC1739.11c.1"/>
<dbReference type="EnsemblFungi" id="SPCC1739.11c.1">
    <property type="protein sequence ID" value="SPCC1739.11c.1:pep"/>
    <property type="gene ID" value="SPCC1739.11c"/>
</dbReference>
<dbReference type="GeneID" id="2539149"/>
<dbReference type="KEGG" id="spo:2539149"/>
<dbReference type="PomBase" id="SPCC1739.11c">
    <property type="gene designation" value="cdc11"/>
</dbReference>
<dbReference type="VEuPathDB" id="FungiDB:SPCC1739.11c"/>
<dbReference type="eggNOG" id="KOG0531">
    <property type="taxonomic scope" value="Eukaryota"/>
</dbReference>
<dbReference type="HOGENOM" id="CLU_291889_0_0_1"/>
<dbReference type="InParanoid" id="O74473"/>
<dbReference type="OMA" id="QPMIHLR"/>
<dbReference type="CD-CODE" id="576F0A76">
    <property type="entry name" value="Centrosome"/>
</dbReference>
<dbReference type="PRO" id="PR:O74473"/>
<dbReference type="Proteomes" id="UP000002485">
    <property type="component" value="Chromosome III"/>
</dbReference>
<dbReference type="GO" id="GO:0005737">
    <property type="term" value="C:cytoplasm"/>
    <property type="evidence" value="ECO:0007669"/>
    <property type="project" value="UniProtKB-SubCell"/>
</dbReference>
<dbReference type="GO" id="GO:0044732">
    <property type="term" value="C:mitotic spindle pole body"/>
    <property type="evidence" value="ECO:0000314"/>
    <property type="project" value="PomBase"/>
</dbReference>
<dbReference type="GO" id="GO:0061499">
    <property type="term" value="C:outer plaque of mitotic spindle pole body"/>
    <property type="evidence" value="ECO:0000314"/>
    <property type="project" value="PomBase"/>
</dbReference>
<dbReference type="GO" id="GO:0032991">
    <property type="term" value="C:protein-containing complex"/>
    <property type="evidence" value="ECO:0000314"/>
    <property type="project" value="PomBase"/>
</dbReference>
<dbReference type="GO" id="GO:0035591">
    <property type="term" value="F:signaling adaptor activity"/>
    <property type="evidence" value="ECO:0000269"/>
    <property type="project" value="PomBase"/>
</dbReference>
<dbReference type="GO" id="GO:0140281">
    <property type="term" value="P:positive regulation of mitotic division septum assembly"/>
    <property type="evidence" value="ECO:0000315"/>
    <property type="project" value="PomBase"/>
</dbReference>
<dbReference type="GO" id="GO:1902412">
    <property type="term" value="P:regulation of mitotic cytokinesis"/>
    <property type="evidence" value="ECO:0000315"/>
    <property type="project" value="PomBase"/>
</dbReference>
<dbReference type="GO" id="GO:0031028">
    <property type="term" value="P:septation initiation signaling"/>
    <property type="evidence" value="ECO:0000315"/>
    <property type="project" value="PomBase"/>
</dbReference>
<dbReference type="FunFam" id="3.80.10.10:FF:002877">
    <property type="entry name" value="Septation initiation network scaffold protein cdc11"/>
    <property type="match status" value="1"/>
</dbReference>
<dbReference type="Gene3D" id="3.80.10.10">
    <property type="entry name" value="Ribonuclease Inhibitor"/>
    <property type="match status" value="2"/>
</dbReference>
<dbReference type="InterPro" id="IPR052574">
    <property type="entry name" value="CDIRP"/>
</dbReference>
<dbReference type="InterPro" id="IPR001611">
    <property type="entry name" value="Leu-rich_rpt"/>
</dbReference>
<dbReference type="InterPro" id="IPR025875">
    <property type="entry name" value="Leu-rich_rpt_4"/>
</dbReference>
<dbReference type="InterPro" id="IPR003591">
    <property type="entry name" value="Leu-rich_rpt_typical-subtyp"/>
</dbReference>
<dbReference type="InterPro" id="IPR032675">
    <property type="entry name" value="LRR_dom_sf"/>
</dbReference>
<dbReference type="PANTHER" id="PTHR47566">
    <property type="match status" value="1"/>
</dbReference>
<dbReference type="PANTHER" id="PTHR47566:SF1">
    <property type="entry name" value="PROTEIN NUD1"/>
    <property type="match status" value="1"/>
</dbReference>
<dbReference type="Pfam" id="PF12799">
    <property type="entry name" value="LRR_4"/>
    <property type="match status" value="1"/>
</dbReference>
<dbReference type="Pfam" id="PF13855">
    <property type="entry name" value="LRR_8"/>
    <property type="match status" value="1"/>
</dbReference>
<dbReference type="PRINTS" id="PR00019">
    <property type="entry name" value="LEURICHRPT"/>
</dbReference>
<dbReference type="SMART" id="SM00364">
    <property type="entry name" value="LRR_BAC"/>
    <property type="match status" value="5"/>
</dbReference>
<dbReference type="SMART" id="SM00365">
    <property type="entry name" value="LRR_SD22"/>
    <property type="match status" value="4"/>
</dbReference>
<dbReference type="SMART" id="SM00369">
    <property type="entry name" value="LRR_TYP"/>
    <property type="match status" value="6"/>
</dbReference>
<dbReference type="SUPFAM" id="SSF52058">
    <property type="entry name" value="L domain-like"/>
    <property type="match status" value="1"/>
</dbReference>
<dbReference type="PROSITE" id="PS51450">
    <property type="entry name" value="LRR"/>
    <property type="match status" value="12"/>
</dbReference>
<evidence type="ECO:0000256" key="1">
    <source>
        <dbReference type="SAM" id="MobiDB-lite"/>
    </source>
</evidence>
<evidence type="ECO:0000269" key="2">
    <source>
    </source>
</evidence>
<evidence type="ECO:0000269" key="3">
    <source>
    </source>
</evidence>
<evidence type="ECO:0000269" key="4">
    <source>
    </source>
</evidence>
<evidence type="ECO:0000269" key="5">
    <source>
    </source>
</evidence>
<feature type="chain" id="PRO_0000339131" description="Septation initiation network scaffold protein cdc11">
    <location>
        <begin position="1"/>
        <end position="1045"/>
    </location>
</feature>
<feature type="repeat" description="LRR 1">
    <location>
        <begin position="604"/>
        <end position="625"/>
    </location>
</feature>
<feature type="repeat" description="LRR 2">
    <location>
        <begin position="627"/>
        <end position="646"/>
    </location>
</feature>
<feature type="repeat" description="LRR 3">
    <location>
        <begin position="647"/>
        <end position="668"/>
    </location>
</feature>
<feature type="repeat" description="LRR 4">
    <location>
        <begin position="669"/>
        <end position="690"/>
    </location>
</feature>
<feature type="repeat" description="LRR 5">
    <location>
        <begin position="691"/>
        <end position="712"/>
    </location>
</feature>
<feature type="repeat" description="LRR 6">
    <location>
        <begin position="713"/>
        <end position="734"/>
    </location>
</feature>
<feature type="repeat" description="LRR 7">
    <location>
        <begin position="736"/>
        <end position="757"/>
    </location>
</feature>
<feature type="repeat" description="LRR 8">
    <location>
        <begin position="758"/>
        <end position="779"/>
    </location>
</feature>
<feature type="repeat" description="LRR 9">
    <location>
        <begin position="780"/>
        <end position="801"/>
    </location>
</feature>
<feature type="repeat" description="LRR 10">
    <location>
        <begin position="802"/>
        <end position="822"/>
    </location>
</feature>
<feature type="repeat" description="LRR 11">
    <location>
        <begin position="846"/>
        <end position="867"/>
    </location>
</feature>
<feature type="repeat" description="LRR 12">
    <location>
        <begin position="868"/>
        <end position="889"/>
    </location>
</feature>
<feature type="repeat" description="LRR 13">
    <location>
        <begin position="892"/>
        <end position="913"/>
    </location>
</feature>
<feature type="repeat" description="LRR 14">
    <location>
        <begin position="914"/>
        <end position="935"/>
    </location>
</feature>
<feature type="repeat" description="LRR 15">
    <location>
        <begin position="940"/>
        <end position="962"/>
    </location>
</feature>
<feature type="domain" description="LRRCT">
    <location>
        <begin position="1005"/>
        <end position="1043"/>
    </location>
</feature>
<feature type="region of interest" description="Disordered" evidence="1">
    <location>
        <begin position="1"/>
        <end position="269"/>
    </location>
</feature>
<feature type="region of interest" description="Disordered" evidence="1">
    <location>
        <begin position="282"/>
        <end position="329"/>
    </location>
</feature>
<feature type="region of interest" description="Disordered" evidence="1">
    <location>
        <begin position="377"/>
        <end position="417"/>
    </location>
</feature>
<feature type="compositionally biased region" description="Basic and acidic residues" evidence="1">
    <location>
        <begin position="1"/>
        <end position="11"/>
    </location>
</feature>
<feature type="compositionally biased region" description="Polar residues" evidence="1">
    <location>
        <begin position="18"/>
        <end position="39"/>
    </location>
</feature>
<feature type="compositionally biased region" description="Low complexity" evidence="1">
    <location>
        <begin position="40"/>
        <end position="52"/>
    </location>
</feature>
<feature type="compositionally biased region" description="Low complexity" evidence="1">
    <location>
        <begin position="96"/>
        <end position="132"/>
    </location>
</feature>
<feature type="compositionally biased region" description="Low complexity" evidence="1">
    <location>
        <begin position="152"/>
        <end position="165"/>
    </location>
</feature>
<feature type="compositionally biased region" description="Polar residues" evidence="1">
    <location>
        <begin position="166"/>
        <end position="176"/>
    </location>
</feature>
<feature type="compositionally biased region" description="Low complexity" evidence="1">
    <location>
        <begin position="187"/>
        <end position="201"/>
    </location>
</feature>
<feature type="compositionally biased region" description="Polar residues" evidence="1">
    <location>
        <begin position="226"/>
        <end position="238"/>
    </location>
</feature>
<feature type="compositionally biased region" description="Polar residues" evidence="1">
    <location>
        <begin position="320"/>
        <end position="329"/>
    </location>
</feature>
<feature type="compositionally biased region" description="Polar residues" evidence="1">
    <location>
        <begin position="379"/>
        <end position="403"/>
    </location>
</feature>
<feature type="modified residue" description="Phosphoserine" evidence="5">
    <location>
        <position position="360"/>
    </location>
</feature>
<feature type="modified residue" description="Phosphoserine" evidence="5">
    <location>
        <position position="558"/>
    </location>
</feature>
<feature type="mutagenesis site" description="No phosphorylation by cdk1." evidence="4">
    <original>S</original>
    <variation>A</variation>
    <location>
        <position position="98"/>
    </location>
</feature>
<feature type="mutagenesis site" description="No phosphorylation by cdk1." evidence="4">
    <original>S</original>
    <variation>A</variation>
    <location>
        <position position="103"/>
    </location>
</feature>
<feature type="mutagenesis site" description="No phosphorylation by cdk1." evidence="4">
    <original>S</original>
    <variation>A</variation>
    <location>
        <position position="136"/>
    </location>
</feature>
<feature type="mutagenesis site" description="No phosphorylation by cdk1." evidence="4">
    <original>S</original>
    <variation>A</variation>
    <location>
        <position position="199"/>
    </location>
</feature>
<feature type="mutagenesis site" description="No phosphorylation by cdk1." evidence="4">
    <original>S</original>
    <variation>A</variation>
    <location>
        <position position="208"/>
    </location>
</feature>
<feature type="mutagenesis site" description="No phosphorylation by cdk1." evidence="4">
    <original>S</original>
    <variation>A</variation>
    <location>
        <position position="360"/>
    </location>
</feature>
<feature type="mutagenesis site" description="No phosphorylation by cdk1." evidence="4">
    <original>S</original>
    <variation>A</variation>
    <location>
        <position position="393"/>
    </location>
</feature>
<feature type="mutagenesis site" description="No phosphorylation by cdk1." evidence="4">
    <original>S</original>
    <variation>A</variation>
    <location>
        <position position="558"/>
    </location>
</feature>
<feature type="mutagenesis site" description="In cdc11-136; normal interaction with sid4; normal localization at the SPB." evidence="2">
    <original>N</original>
    <variation>M</variation>
    <location>
        <position position="767"/>
    </location>
</feature>
<feature type="mutagenesis site" description="In cdc11-123; no interaction with sid4; does not localize at the SPB." evidence="2">
    <original>R</original>
    <variation>A</variation>
    <location>
        <position position="947"/>
    </location>
</feature>
<feature type="mutagenesis site" description="In cdc11-123; no interaction with sid4; does not localize at the SPB." evidence="2">
    <original>T</original>
    <variation>I</variation>
    <location>
        <position position="1041"/>
    </location>
</feature>
<proteinExistence type="evidence at protein level"/>
<keyword id="KW-0963">Cytoplasm</keyword>
<keyword id="KW-0206">Cytoskeleton</keyword>
<keyword id="KW-0433">Leucine-rich repeat</keyword>
<keyword id="KW-0597">Phosphoprotein</keyword>
<keyword id="KW-1185">Reference proteome</keyword>
<keyword id="KW-0677">Repeat</keyword>
<name>CDC11_SCHPO</name>
<comment type="function">
    <text evidence="2 4">Essential for the onset of septum formation. Involved in the organization of astral microtubules during mitosis. Acts as a bridge between sid4 and the other SIN proteins mediating their association with the spindle pole body (SPB). The sid4-cdc11 complex organizes a signaling hub on the SPB which coordinates cell and nuclear division.</text>
</comment>
<comment type="subunit">
    <text evidence="2 3 4">Interacts with sid4. When hyperphosphorylated, interacts with byr4. Also interacts with spg1, sid2, cdc13 and cdc16.</text>
</comment>
<comment type="subcellular location">
    <subcellularLocation>
        <location>Cytoplasm</location>
    </subcellularLocation>
    <subcellularLocation>
        <location>Cytoplasm</location>
        <location>Cytoskeleton</location>
        <location>Microtubule organizing center</location>
        <location>Spindle pole body</location>
    </subcellularLocation>
    <text>Localizes at the spindle pole body and the barrier septum.</text>
</comment>
<comment type="PTM">
    <text evidence="2 3 4 5">Phosphorylated by cdc7 and cdk1. Hyperphosphorylated during anaphase. Dephosphorylated by par1.</text>
</comment>
<reference key="1">
    <citation type="journal article" date="2002" name="Nature">
        <title>The genome sequence of Schizosaccharomyces pombe.</title>
        <authorList>
            <person name="Wood V."/>
            <person name="Gwilliam R."/>
            <person name="Rajandream M.A."/>
            <person name="Lyne M.H."/>
            <person name="Lyne R."/>
            <person name="Stewart A."/>
            <person name="Sgouros J.G."/>
            <person name="Peat N."/>
            <person name="Hayles J."/>
            <person name="Baker S.G."/>
            <person name="Basham D."/>
            <person name="Bowman S."/>
            <person name="Brooks K."/>
            <person name="Brown D."/>
            <person name="Brown S."/>
            <person name="Chillingworth T."/>
            <person name="Churcher C.M."/>
            <person name="Collins M."/>
            <person name="Connor R."/>
            <person name="Cronin A."/>
            <person name="Davis P."/>
            <person name="Feltwell T."/>
            <person name="Fraser A."/>
            <person name="Gentles S."/>
            <person name="Goble A."/>
            <person name="Hamlin N."/>
            <person name="Harris D.E."/>
            <person name="Hidalgo J."/>
            <person name="Hodgson G."/>
            <person name="Holroyd S."/>
            <person name="Hornsby T."/>
            <person name="Howarth S."/>
            <person name="Huckle E.J."/>
            <person name="Hunt S."/>
            <person name="Jagels K."/>
            <person name="James K.D."/>
            <person name="Jones L."/>
            <person name="Jones M."/>
            <person name="Leather S."/>
            <person name="McDonald S."/>
            <person name="McLean J."/>
            <person name="Mooney P."/>
            <person name="Moule S."/>
            <person name="Mungall K.L."/>
            <person name="Murphy L.D."/>
            <person name="Niblett D."/>
            <person name="Odell C."/>
            <person name="Oliver K."/>
            <person name="O'Neil S."/>
            <person name="Pearson D."/>
            <person name="Quail M.A."/>
            <person name="Rabbinowitsch E."/>
            <person name="Rutherford K.M."/>
            <person name="Rutter S."/>
            <person name="Saunders D."/>
            <person name="Seeger K."/>
            <person name="Sharp S."/>
            <person name="Skelton J."/>
            <person name="Simmonds M.N."/>
            <person name="Squares R."/>
            <person name="Squares S."/>
            <person name="Stevens K."/>
            <person name="Taylor K."/>
            <person name="Taylor R.G."/>
            <person name="Tivey A."/>
            <person name="Walsh S.V."/>
            <person name="Warren T."/>
            <person name="Whitehead S."/>
            <person name="Woodward J.R."/>
            <person name="Volckaert G."/>
            <person name="Aert R."/>
            <person name="Robben J."/>
            <person name="Grymonprez B."/>
            <person name="Weltjens I."/>
            <person name="Vanstreels E."/>
            <person name="Rieger M."/>
            <person name="Schaefer M."/>
            <person name="Mueller-Auer S."/>
            <person name="Gabel C."/>
            <person name="Fuchs M."/>
            <person name="Duesterhoeft A."/>
            <person name="Fritzc C."/>
            <person name="Holzer E."/>
            <person name="Moestl D."/>
            <person name="Hilbert H."/>
            <person name="Borzym K."/>
            <person name="Langer I."/>
            <person name="Beck A."/>
            <person name="Lehrach H."/>
            <person name="Reinhardt R."/>
            <person name="Pohl T.M."/>
            <person name="Eger P."/>
            <person name="Zimmermann W."/>
            <person name="Wedler H."/>
            <person name="Wambutt R."/>
            <person name="Purnelle B."/>
            <person name="Goffeau A."/>
            <person name="Cadieu E."/>
            <person name="Dreano S."/>
            <person name="Gloux S."/>
            <person name="Lelaure V."/>
            <person name="Mottier S."/>
            <person name="Galibert F."/>
            <person name="Aves S.J."/>
            <person name="Xiang Z."/>
            <person name="Hunt C."/>
            <person name="Moore K."/>
            <person name="Hurst S.M."/>
            <person name="Lucas M."/>
            <person name="Rochet M."/>
            <person name="Gaillardin C."/>
            <person name="Tallada V.A."/>
            <person name="Garzon A."/>
            <person name="Thode G."/>
            <person name="Daga R.R."/>
            <person name="Cruzado L."/>
            <person name="Jimenez J."/>
            <person name="Sanchez M."/>
            <person name="del Rey F."/>
            <person name="Benito J."/>
            <person name="Dominguez A."/>
            <person name="Revuelta J.L."/>
            <person name="Moreno S."/>
            <person name="Armstrong J."/>
            <person name="Forsburg S.L."/>
            <person name="Cerutti L."/>
            <person name="Lowe T."/>
            <person name="McCombie W.R."/>
            <person name="Paulsen I."/>
            <person name="Potashkin J."/>
            <person name="Shpakovski G.V."/>
            <person name="Ussery D."/>
            <person name="Barrell B.G."/>
            <person name="Nurse P."/>
        </authorList>
    </citation>
    <scope>NUCLEOTIDE SEQUENCE [LARGE SCALE GENOMIC DNA]</scope>
    <source>
        <strain>972 / ATCC 24843</strain>
    </source>
</reference>
<reference key="2">
    <citation type="journal article" date="2001" name="Curr. Biol.">
        <title>S. pombe cdc11p, together with sid4p, provides an anchor for septation initiation network proteins on the spindle pole body.</title>
        <authorList>
            <person name="Krapp A."/>
            <person name="Schmidt S."/>
            <person name="Cano E."/>
            <person name="Simanis V."/>
        </authorList>
    </citation>
    <scope>FUNCTION</scope>
    <scope>INTERACTION WITH SID4</scope>
    <scope>SUBCELLULAR LOCATION</scope>
    <scope>PHOSPHORYLATION</scope>
    <scope>MUTAGENESIS OF ASN-767; ARG-947 AND THR-1041</scope>
</reference>
<reference key="3">
    <citation type="journal article" date="2003" name="Curr. Biol.">
        <title>Mitotic hyperphosphorylation of the fission yeast SIN scaffold protein cdc11p is regulated by the protein kinase cdc7p.</title>
        <authorList>
            <person name="Krapp A."/>
            <person name="Cano E."/>
            <person name="Simanis V."/>
        </authorList>
    </citation>
    <scope>INTERACTION WITH BYR4</scope>
    <scope>PHOSPHORYLATION BY CDC7</scope>
    <scope>DEPHOSPHORYLATION BY PAR1</scope>
</reference>
<reference key="4">
    <citation type="journal article" date="2004" name="Curr. Biol.">
        <title>Sid4p-Cdc11p assembles the septation initiation network and its regulators at the S. pombe SPB.</title>
        <authorList>
            <person name="Morrell J.L."/>
            <person name="Tomlin G.C."/>
            <person name="Rajagopalan S."/>
            <person name="Venkatram S."/>
            <person name="Feoktistova A.S."/>
            <person name="Tasto J.J."/>
            <person name="Mehta S."/>
            <person name="Jennings J.L."/>
            <person name="Link A."/>
            <person name="Balasubramanian M.K."/>
            <person name="Gould K.L."/>
        </authorList>
    </citation>
    <scope>FUNCTION</scope>
    <scope>INTERACTION WITH SPG1; SID2</scope>
    <scope>CDC13 AND CDC16</scope>
    <scope>SUBCELLULAR LOCATION</scope>
    <scope>PHOSPHORYLATION BY CDCK1</scope>
    <scope>MUTAGENESIS OF SER-98; SER-103; SER-136; SER-199; SER-208; SER-360; SER-393 AND SER-558</scope>
</reference>
<reference key="5">
    <citation type="journal article" date="2006" name="Nat. Biotechnol.">
        <title>ORFeome cloning and global analysis of protein localization in the fission yeast Schizosaccharomyces pombe.</title>
        <authorList>
            <person name="Matsuyama A."/>
            <person name="Arai R."/>
            <person name="Yashiroda Y."/>
            <person name="Shirai A."/>
            <person name="Kamata A."/>
            <person name="Sekido S."/>
            <person name="Kobayashi Y."/>
            <person name="Hashimoto A."/>
            <person name="Hamamoto M."/>
            <person name="Hiraoka Y."/>
            <person name="Horinouchi S."/>
            <person name="Yoshida M."/>
        </authorList>
    </citation>
    <scope>SUBCELLULAR LOCATION [LARGE SCALE ANALYSIS]</scope>
</reference>
<reference key="6">
    <citation type="journal article" date="2008" name="J. Proteome Res.">
        <title>Phosphoproteome analysis of fission yeast.</title>
        <authorList>
            <person name="Wilson-Grady J.T."/>
            <person name="Villen J."/>
            <person name="Gygi S.P."/>
        </authorList>
    </citation>
    <scope>PHOSPHORYLATION [LARGE SCALE ANALYSIS] AT SER-360 AND SER-558</scope>
    <scope>IDENTIFICATION BY MASS SPECTROMETRY</scope>
</reference>
<sequence>MEQLWLEHDLSEEWIPQPQEQGSDNSSEPPTTSNVNNTQSTGRGSSGTSTEHGTFKKGRNDAPDVPQWKQVNAKNPVARDIFARLDLENMFEESSKQSPPSKSPTKNPSKKSSNNSSRRSSSSVGKLSNVSNMQSSPSKDPFVSQDYEKESISSSQFSKKYSEGSLKSQQSNTRSNSVHEKQNTDHASNASSSSSVVSSPSLKPNNTSPLKLFQGASDPFTREHLNQLTQDVKSNSFENGEKQFSLPEPRRPQKPMRTTERKASLNTKDLYQEVEEVMARLRGRMPNSGRESTIFLPRKLSGLREEEEQDEISVEVSQEDSSNAFPSLSDQLHLKSLQSMKRVTSIFNDNDDSFPSASSSPQRQAYMTDKMPLREIDVGSSQSSSKTARLNSSPKSTLKTSSVKTRRSHSAQSSRKVSDYPNMVVITPADLPEGIDTTQGSMEFDRIHNRWRRKGHDSDLGFDFETDEDASLSHPERTILFKAASTRHQANNDPNNLEKQQPHSFPLRKQNVAQSEFPKHSLRDNSENAPQILSSFHDLSLQNESFDEMFNGRYENGSPIPFISSGSGLKSKADKDAEYSFSVSRQSIIQILSDVEPYEPFWKRIIQLDISRRHLDSLIGLSELCPSIEELTLEGNEIAYLTGCPVTIRDLNAVENRLSSLTSFSNLLNLQYLDISYNQLEDLTGLSSLIHLRELKVDSNHLWSLDGIQHLDGLLKLSACNNRIKELSFTNSNLHRLEELLLGNNEIEEIEEISSLQNLMVLQLDNNKLTNLKASQPMIHLRILRISNNAIHQLEVDQFPHLRTLYMDLNRFNRPPDIRRLKRLVNFSFRTQDPEASNFVIQPSLDIRNLYLSNNTFVTLDCKHMFLGVRYLELANVQLKEVPKYIATSMPNLRVLDLSHNYISDIESLKPLQMIHRLYLVGNRIKKMRNLCDILANLKQLNVLDLRMNPLNFNIYPVIDDSIYELSAASKYQQSINQKGHHRKEDPQKQWQEKELAFSSTLSEAWRTRRKMYAEAILLACPHLEWLDGSDVSQSSRAAFTKSSN</sequence>
<organism>
    <name type="scientific">Schizosaccharomyces pombe (strain 972 / ATCC 24843)</name>
    <name type="common">Fission yeast</name>
    <dbReference type="NCBI Taxonomy" id="284812"/>
    <lineage>
        <taxon>Eukaryota</taxon>
        <taxon>Fungi</taxon>
        <taxon>Dikarya</taxon>
        <taxon>Ascomycota</taxon>
        <taxon>Taphrinomycotina</taxon>
        <taxon>Schizosaccharomycetes</taxon>
        <taxon>Schizosaccharomycetales</taxon>
        <taxon>Schizosaccharomycetaceae</taxon>
        <taxon>Schizosaccharomyces</taxon>
    </lineage>
</organism>